<dbReference type="EMBL" id="Z38011">
    <property type="protein sequence ID" value="CAA86112.1"/>
    <property type="status" value="ALT_INIT"/>
    <property type="molecule type" value="Genomic_DNA"/>
</dbReference>
<dbReference type="EMBL" id="Z38012">
    <property type="protein sequence ID" value="CAA86112.1"/>
    <property type="status" value="JOINED"/>
    <property type="molecule type" value="Genomic_DNA"/>
</dbReference>
<dbReference type="EMBL" id="Z38013">
    <property type="protein sequence ID" value="CAA86112.1"/>
    <property type="status" value="JOINED"/>
    <property type="molecule type" value="Genomic_DNA"/>
</dbReference>
<dbReference type="EMBL" id="Z38015">
    <property type="protein sequence ID" value="CAA86112.1"/>
    <property type="status" value="JOINED"/>
    <property type="molecule type" value="Genomic_DNA"/>
</dbReference>
<dbReference type="EMBL" id="AC170864">
    <property type="status" value="NOT_ANNOTATED_CDS"/>
    <property type="molecule type" value="Genomic_DNA"/>
</dbReference>
<dbReference type="EMBL" id="S60312">
    <property type="protein sequence ID" value="AAC60663.1"/>
    <property type="molecule type" value="mRNA"/>
</dbReference>
<dbReference type="CCDS" id="CCDS20888.2"/>
<dbReference type="PIR" id="I58106">
    <property type="entry name" value="I58106"/>
</dbReference>
<dbReference type="RefSeq" id="NP_034188.2">
    <property type="nucleotide sequence ID" value="NM_010058.2"/>
</dbReference>
<dbReference type="SMR" id="Q08274"/>
<dbReference type="BioGRID" id="199243">
    <property type="interactions" value="11"/>
</dbReference>
<dbReference type="FunCoup" id="Q08274">
    <property type="interactions" value="268"/>
</dbReference>
<dbReference type="IntAct" id="Q08274">
    <property type="interactions" value="2"/>
</dbReference>
<dbReference type="STRING" id="10090.ENSMUSP00000032570"/>
<dbReference type="GlyGen" id="Q08274">
    <property type="glycosylation" value="4 sites"/>
</dbReference>
<dbReference type="iPTMnet" id="Q08274"/>
<dbReference type="PhosphoSitePlus" id="Q08274"/>
<dbReference type="SwissPalm" id="Q08274"/>
<dbReference type="PaxDb" id="10090-ENSMUSP00000032570"/>
<dbReference type="ProteomicsDB" id="279736"/>
<dbReference type="Pumba" id="Q08274"/>
<dbReference type="Antibodypedia" id="31398">
    <property type="antibodies" value="141 antibodies from 20 providers"/>
</dbReference>
<dbReference type="DNASU" id="13401"/>
<dbReference type="Ensembl" id="ENSMUST00000032570.14">
    <property type="protein sequence ID" value="ENSMUSP00000032570.8"/>
    <property type="gene ID" value="ENSMUSG00000030410.17"/>
</dbReference>
<dbReference type="GeneID" id="13401"/>
<dbReference type="KEGG" id="mmu:13401"/>
<dbReference type="UCSC" id="uc009fkl.2">
    <property type="organism name" value="mouse"/>
</dbReference>
<dbReference type="AGR" id="MGI:94907"/>
<dbReference type="CTD" id="1762"/>
<dbReference type="MGI" id="MGI:94907">
    <property type="gene designation" value="Dmwd"/>
</dbReference>
<dbReference type="VEuPathDB" id="HostDB:ENSMUSG00000030410"/>
<dbReference type="eggNOG" id="KOG2394">
    <property type="taxonomic scope" value="Eukaryota"/>
</dbReference>
<dbReference type="GeneTree" id="ENSGT00390000007686"/>
<dbReference type="InParanoid" id="Q08274"/>
<dbReference type="OMA" id="LKWIPET"/>
<dbReference type="OrthoDB" id="3367at2759"/>
<dbReference type="PhylomeDB" id="Q08274"/>
<dbReference type="TreeFam" id="TF314961"/>
<dbReference type="BioGRID-ORCS" id="13401">
    <property type="hits" value="2 hits in 76 CRISPR screens"/>
</dbReference>
<dbReference type="CD-CODE" id="CE726F99">
    <property type="entry name" value="Postsynaptic density"/>
</dbReference>
<dbReference type="PRO" id="PR:Q08274"/>
<dbReference type="Proteomes" id="UP000000589">
    <property type="component" value="Chromosome 7"/>
</dbReference>
<dbReference type="RNAct" id="Q08274">
    <property type="molecule type" value="protein"/>
</dbReference>
<dbReference type="Bgee" id="ENSMUSG00000030410">
    <property type="expression patterns" value="Expressed in rostral migratory stream and 241 other cell types or tissues"/>
</dbReference>
<dbReference type="ExpressionAtlas" id="Q08274">
    <property type="expression patterns" value="baseline and differential"/>
</dbReference>
<dbReference type="GO" id="GO:0005737">
    <property type="term" value="C:cytoplasm"/>
    <property type="evidence" value="ECO:0000250"/>
    <property type="project" value="UniProtKB"/>
</dbReference>
<dbReference type="GO" id="GO:0030425">
    <property type="term" value="C:dendrite"/>
    <property type="evidence" value="ECO:0007669"/>
    <property type="project" value="UniProtKB-SubCell"/>
</dbReference>
<dbReference type="GO" id="GO:0005634">
    <property type="term" value="C:nucleus"/>
    <property type="evidence" value="ECO:0000250"/>
    <property type="project" value="UniProtKB"/>
</dbReference>
<dbReference type="GO" id="GO:0043204">
    <property type="term" value="C:perikaryon"/>
    <property type="evidence" value="ECO:0007669"/>
    <property type="project" value="UniProtKB-SubCell"/>
</dbReference>
<dbReference type="GO" id="GO:0035800">
    <property type="term" value="F:deubiquitinase activator activity"/>
    <property type="evidence" value="ECO:0000250"/>
    <property type="project" value="UniProtKB"/>
</dbReference>
<dbReference type="Gene3D" id="2.130.10.10">
    <property type="entry name" value="YVTN repeat-like/Quinoprotein amine dehydrogenase"/>
    <property type="match status" value="1"/>
</dbReference>
<dbReference type="InterPro" id="IPR015943">
    <property type="entry name" value="WD40/YVTN_repeat-like_dom_sf"/>
</dbReference>
<dbReference type="InterPro" id="IPR036322">
    <property type="entry name" value="WD40_repeat_dom_sf"/>
</dbReference>
<dbReference type="InterPro" id="IPR001680">
    <property type="entry name" value="WD40_rpt"/>
</dbReference>
<dbReference type="InterPro" id="IPR051362">
    <property type="entry name" value="WD_repeat_creC_regulators"/>
</dbReference>
<dbReference type="PANTHER" id="PTHR14107:SF15">
    <property type="entry name" value="DYSTROPHIA MYOTONICA WD REPEAT-CONTAINING PROTEIN"/>
    <property type="match status" value="1"/>
</dbReference>
<dbReference type="PANTHER" id="PTHR14107">
    <property type="entry name" value="WD REPEAT PROTEIN"/>
    <property type="match status" value="1"/>
</dbReference>
<dbReference type="Pfam" id="PF00400">
    <property type="entry name" value="WD40"/>
    <property type="match status" value="3"/>
</dbReference>
<dbReference type="SMART" id="SM00320">
    <property type="entry name" value="WD40"/>
    <property type="match status" value="4"/>
</dbReference>
<dbReference type="SUPFAM" id="SSF50978">
    <property type="entry name" value="WD40 repeat-like"/>
    <property type="match status" value="1"/>
</dbReference>
<dbReference type="PROSITE" id="PS50082">
    <property type="entry name" value="WD_REPEATS_2"/>
    <property type="match status" value="1"/>
</dbReference>
<dbReference type="PROSITE" id="PS50294">
    <property type="entry name" value="WD_REPEATS_REGION"/>
    <property type="match status" value="1"/>
</dbReference>
<accession>Q08274</accession>
<accession>E9QLY4</accession>
<organism>
    <name type="scientific">Mus musculus</name>
    <name type="common">Mouse</name>
    <dbReference type="NCBI Taxonomy" id="10090"/>
    <lineage>
        <taxon>Eukaryota</taxon>
        <taxon>Metazoa</taxon>
        <taxon>Chordata</taxon>
        <taxon>Craniata</taxon>
        <taxon>Vertebrata</taxon>
        <taxon>Euteleostomi</taxon>
        <taxon>Mammalia</taxon>
        <taxon>Eutheria</taxon>
        <taxon>Euarchontoglires</taxon>
        <taxon>Glires</taxon>
        <taxon>Rodentia</taxon>
        <taxon>Myomorpha</taxon>
        <taxon>Muroidea</taxon>
        <taxon>Muridae</taxon>
        <taxon>Murinae</taxon>
        <taxon>Mus</taxon>
        <taxon>Mus</taxon>
    </lineage>
</organism>
<proteinExistence type="evidence at protein level"/>
<protein>
    <recommendedName>
        <fullName>Dystrophia myotonica WD repeat-containing protein</fullName>
    </recommendedName>
    <alternativeName>
        <fullName>Dystrophia myotonica-containing WD repeat motif protein</fullName>
    </alternativeName>
    <alternativeName>
        <fullName>Protein DMR-N9</fullName>
    </alternativeName>
</protein>
<keyword id="KW-0007">Acetylation</keyword>
<keyword id="KW-0966">Cell projection</keyword>
<keyword id="KW-0963">Cytoplasm</keyword>
<keyword id="KW-0488">Methylation</keyword>
<keyword id="KW-0539">Nucleus</keyword>
<keyword id="KW-0597">Phosphoprotein</keyword>
<keyword id="KW-1185">Reference proteome</keyword>
<keyword id="KW-0677">Repeat</keyword>
<keyword id="KW-0853">WD repeat</keyword>
<gene>
    <name type="primary">Dmwd</name>
    <name type="synonym">Dm9</name>
</gene>
<reference key="1">
    <citation type="journal article" date="1995" name="Hum. Mol. Genet.">
        <title>Structural organization and developmental expression pattern of the mouse WD-repeat gene DMR-N9 immediately upstream of the myotonic dystrophy locus.</title>
        <authorList>
            <person name="Jansen G."/>
            <person name="Baechner D."/>
            <person name="Coerwinkel M."/>
            <person name="Wormskamp N."/>
            <person name="Hameister H."/>
            <person name="Wieringa B."/>
        </authorList>
    </citation>
    <scope>NUCLEOTIDE SEQUENCE [GENOMIC DNA]</scope>
    <scope>TISSUE SPECIFICITY</scope>
    <scope>DEVELOPMENTAL STAGE</scope>
    <source>
        <strain>129/Sv</strain>
        <tissue>Brain</tissue>
    </source>
</reference>
<reference key="2">
    <citation type="journal article" date="2009" name="PLoS Biol.">
        <title>Lineage-specific biology revealed by a finished genome assembly of the mouse.</title>
        <authorList>
            <person name="Church D.M."/>
            <person name="Goodstadt L."/>
            <person name="Hillier L.W."/>
            <person name="Zody M.C."/>
            <person name="Goldstein S."/>
            <person name="She X."/>
            <person name="Bult C.J."/>
            <person name="Agarwala R."/>
            <person name="Cherry J.L."/>
            <person name="DiCuccio M."/>
            <person name="Hlavina W."/>
            <person name="Kapustin Y."/>
            <person name="Meric P."/>
            <person name="Maglott D."/>
            <person name="Birtle Z."/>
            <person name="Marques A.C."/>
            <person name="Graves T."/>
            <person name="Zhou S."/>
            <person name="Teague B."/>
            <person name="Potamousis K."/>
            <person name="Churas C."/>
            <person name="Place M."/>
            <person name="Herschleb J."/>
            <person name="Runnheim R."/>
            <person name="Forrest D."/>
            <person name="Amos-Landgraf J."/>
            <person name="Schwartz D.C."/>
            <person name="Cheng Z."/>
            <person name="Lindblad-Toh K."/>
            <person name="Eichler E.E."/>
            <person name="Ponting C.P."/>
        </authorList>
    </citation>
    <scope>NUCLEOTIDE SEQUENCE [LARGE SCALE GENOMIC DNA]</scope>
    <source>
        <strain>C57BL/6J</strain>
    </source>
</reference>
<reference key="3">
    <citation type="journal article" date="1992" name="Nat. Genet.">
        <title>Characterization of the myotonic dystrophy region predicts multiple protein isoform-encoding mRNAs.</title>
        <authorList>
            <person name="Jansen G."/>
            <person name="Mahadevan M.S."/>
            <person name="Amemiya C."/>
            <person name="Wormskamp N."/>
            <person name="Segers B."/>
            <person name="Hendriks W."/>
            <person name="O'Hoy K."/>
            <person name="Baird S."/>
            <person name="Sabourin L."/>
            <person name="Lennon G."/>
            <person name="Jap P.L."/>
            <person name="Iles D."/>
            <person name="Coerwinkel M."/>
            <person name="Hofker M."/>
            <person name="Carrano A.V."/>
            <person name="de Jong P.J."/>
            <person name="Korneluk R.G."/>
            <person name="Wieringa B."/>
        </authorList>
    </citation>
    <scope>NUCLEOTIDE SEQUENCE [MRNA] OF 98-665</scope>
    <scope>TISSUE SPECIFICITY</scope>
    <source>
        <strain>129</strain>
        <tissue>Brain</tissue>
    </source>
</reference>
<reference key="4">
    <citation type="journal article" date="2003" name="Brain Res.">
        <title>The DMWD protein from the myotonic dystrophy (DM1) gene region is developmentally regulated and is present most prominently in synapse-dense brain areas.</title>
        <authorList>
            <person name="Westerlaken J.H."/>
            <person name="Van der Zee C.E."/>
            <person name="Peters W."/>
            <person name="Wieringa B."/>
        </authorList>
    </citation>
    <scope>SUBCELLULAR LOCATION</scope>
    <scope>TISSUE SPECIFICITY</scope>
    <scope>DEVELOPMENTAL STAGE</scope>
</reference>
<reference key="5">
    <citation type="journal article" date="2010" name="Cell">
        <title>A tissue-specific atlas of mouse protein phosphorylation and expression.</title>
        <authorList>
            <person name="Huttlin E.L."/>
            <person name="Jedrychowski M.P."/>
            <person name="Elias J.E."/>
            <person name="Goswami T."/>
            <person name="Rad R."/>
            <person name="Beausoleil S.A."/>
            <person name="Villen J."/>
            <person name="Haas W."/>
            <person name="Sowa M.E."/>
            <person name="Gygi S.P."/>
        </authorList>
    </citation>
    <scope>IDENTIFICATION BY MASS SPECTROMETRY [LARGE SCALE ANALYSIS]</scope>
    <source>
        <tissue>Brain</tissue>
        <tissue>Lung</tissue>
        <tissue>Spleen</tissue>
    </source>
</reference>
<reference key="6">
    <citation type="journal article" date="2014" name="Mol. Cell. Proteomics">
        <title>Immunoaffinity enrichment and mass spectrometry analysis of protein methylation.</title>
        <authorList>
            <person name="Guo A."/>
            <person name="Gu H."/>
            <person name="Zhou J."/>
            <person name="Mulhern D."/>
            <person name="Wang Y."/>
            <person name="Lee K.A."/>
            <person name="Yang V."/>
            <person name="Aguiar M."/>
            <person name="Kornhauser J."/>
            <person name="Jia X."/>
            <person name="Ren J."/>
            <person name="Beausoleil S.A."/>
            <person name="Silva J.C."/>
            <person name="Vemulapalli V."/>
            <person name="Bedford M.T."/>
            <person name="Comb M.J."/>
        </authorList>
    </citation>
    <scope>METHYLATION [LARGE SCALE ANALYSIS] AT ARG-543</scope>
    <scope>IDENTIFICATION BY MASS SPECTROMETRY [LARGE SCALE ANALYSIS]</scope>
    <source>
        <tissue>Brain</tissue>
    </source>
</reference>
<comment type="function">
    <text evidence="1">Regulator of the deubiquitinating USP12/DMWD/WDR48 complex. Functions as a cofactor that promotes USP12 enzymatic activity.</text>
</comment>
<comment type="subunit">
    <text evidence="1">Component of the USP12/DMWD/WDR48 deubiquitinating complex. Interacts with USP12; promotes its enzymatic activity. Interacts with USP46.</text>
</comment>
<comment type="subcellular location">
    <subcellularLocation>
        <location evidence="1">Cytoplasm</location>
    </subcellularLocation>
    <subcellularLocation>
        <location evidence="4">Nucleus</location>
    </subcellularLocation>
    <subcellularLocation>
        <location evidence="4">Perikaryon</location>
    </subcellularLocation>
    <subcellularLocation>
        <location evidence="4">Cell projection</location>
        <location evidence="4">Dendrite</location>
    </subcellularLocation>
    <text evidence="1 4">Localizes mainly to the cytoplasm however shuttles between the cytoplasm and nucleus (By similarity). In neurons, shows punctate expression throughout the cell body, nucleus and dendrites. Not detected in axons (PubMed:12691844).</text>
</comment>
<comment type="tissue specificity">
    <text evidence="4 5 6">Widely expressed in brain where it localizes to the olfactory bulb, forebrain, thalamus, hippocampus, cerebellum, cortex and hypothalamus (at protein level) (PubMed:12691844). Expression seems to be particularly strong in areas of high synaptic density such as the glomerular layer of the olfactory bulb, and mossy fiber terminal fields of the hippocampus (at protein level) (PubMed:12691844). Expressed in retina, with strongest expression in the external and internal plexiform layers (at protein level) (PubMed:12691844). Strongly expressed in brain and testis (PubMed:1302022, PubMed:7633444). Also detected at lower levels in heart, kidney, liver, lung, ovary, uterus, bladder and skeletal muscle (PubMed:1302022, PubMed:7633444). In testis, expression seems to be restricted to secondary spermatocytes (PubMed:1302022).</text>
</comment>
<comment type="developmental stage">
    <text evidence="4 6">In brain, shows increasing expression levels from postnatal day 7 onwards reaching peak levels by postnatal day 21 (at protein level) (PubMed:12691844). Expression is seen very early in embryogenesis, 9.5 dpc in all parts of the embryo (PubMed:7633444). Mid-gestation embryos (14.5 dpc) show high expression in all neural tissues such as telencephalon, retina and spinal cord (PubMed:7633444). In the 16.5 day old embryo high expression is seen in the neural tissues, like telencephalon and mesencephalon and in the non-neural tissues, such as muscle tissues in the tongue and around the ribs (PubMed:7633444).</text>
</comment>
<comment type="sequence caution" evidence="7">
    <conflict type="erroneous initiation">
        <sequence resource="EMBL-CDS" id="CAA86112"/>
    </conflict>
</comment>
<sequence length="665" mass="69816">MAAGGAEGGPGPSAAMGDCAEIKSQFRTREGFYKLLPGDATRRSGPTSAQTPAPPQPTQPPPGPAAASGPGAAGPASSPPPAGPGPGPALPAVRLSLVRLGDPDGAGEPPSTPSGLGAGGDRVCFNLGRELYFYPGCCRSGSQRSIDLNKPIDKRIYKGTQPTCHDFNQFTAATETISLLVGFSAGQVQYLDLIKKDTSKLFNEERLIDKTKVTYLKWLPESESLFLASHASGHLYLYNVSHPCTSTPPQYSLLKQGEGFAVYAAKSKAPRNPLAKWAVGEGPLNEFAFSPDGRHLACVSQDGCLRVFHFDSMLLRGLMKSYFGGLLCVCWSPDGRYVVTGGEDDLVTVWSFTEGRVVARGHGHKSWVNAVAFDPYTTRAEEAASASADGDPSGEEEEPEVTSSDTGAPVSPLPKAGSITYRFGSAGQDTQFCLWDLTEDVLSPHPSLARTRTLPGTPGATPPASGSSRAGETGAGPLPRSLSRSNSLPHPAGGGKAGGPSASMEPGIPFSIGRFATLTLQERRDRGAEKEHKRYHSLGNISRGGSGGNSSNDKLSGPAPRSRLDPAKVLGTALCPRIHEVPLLEPLVCKKIAQERLTVLLFLEDCIITACQEGLICTWARPGKAFTDEETEAQAGQASWPRSPSKSVVEGISSQPGSSPSGTVV</sequence>
<evidence type="ECO:0000250" key="1">
    <source>
        <dbReference type="UniProtKB" id="Q09019"/>
    </source>
</evidence>
<evidence type="ECO:0000255" key="2"/>
<evidence type="ECO:0000256" key="3">
    <source>
        <dbReference type="SAM" id="MobiDB-lite"/>
    </source>
</evidence>
<evidence type="ECO:0000269" key="4">
    <source>
    </source>
</evidence>
<evidence type="ECO:0000269" key="5">
    <source>
    </source>
</evidence>
<evidence type="ECO:0000269" key="6">
    <source>
    </source>
</evidence>
<evidence type="ECO:0000305" key="7"/>
<evidence type="ECO:0007744" key="8">
    <source>
    </source>
</evidence>
<name>DMWD_MOUSE</name>
<feature type="initiator methionine" description="Removed" evidence="1">
    <location>
        <position position="1"/>
    </location>
</feature>
<feature type="chain" id="PRO_0000050957" description="Dystrophia myotonica WD repeat-containing protein">
    <location>
        <begin position="2"/>
        <end position="665"/>
    </location>
</feature>
<feature type="repeat" description="WD 1" evidence="2">
    <location>
        <begin position="208"/>
        <end position="248"/>
    </location>
</feature>
<feature type="repeat" description="WD 2" evidence="2">
    <location>
        <begin position="279"/>
        <end position="318"/>
    </location>
</feature>
<feature type="repeat" description="WD 3" evidence="2">
    <location>
        <begin position="321"/>
        <end position="360"/>
    </location>
</feature>
<feature type="repeat" description="WD 4" evidence="2">
    <location>
        <begin position="363"/>
        <end position="445"/>
    </location>
</feature>
<feature type="repeat" description="WD 5" evidence="2">
    <location>
        <begin position="592"/>
        <end position="629"/>
    </location>
</feature>
<feature type="region of interest" description="Disordered" evidence="3">
    <location>
        <begin position="1"/>
        <end position="91"/>
    </location>
</feature>
<feature type="region of interest" description="Disordered" evidence="3">
    <location>
        <begin position="100"/>
        <end position="119"/>
    </location>
</feature>
<feature type="region of interest" description="Disordered" evidence="3">
    <location>
        <begin position="380"/>
        <end position="413"/>
    </location>
</feature>
<feature type="region of interest" description="Disordered" evidence="3">
    <location>
        <begin position="446"/>
        <end position="506"/>
    </location>
</feature>
<feature type="region of interest" description="Disordered" evidence="3">
    <location>
        <begin position="524"/>
        <end position="564"/>
    </location>
</feature>
<feature type="region of interest" description="Disordered" evidence="3">
    <location>
        <begin position="628"/>
        <end position="665"/>
    </location>
</feature>
<feature type="compositionally biased region" description="Gly residues" evidence="3">
    <location>
        <begin position="1"/>
        <end position="11"/>
    </location>
</feature>
<feature type="compositionally biased region" description="Pro residues" evidence="3">
    <location>
        <begin position="52"/>
        <end position="64"/>
    </location>
</feature>
<feature type="compositionally biased region" description="Low complexity" evidence="3">
    <location>
        <begin position="65"/>
        <end position="76"/>
    </location>
</feature>
<feature type="compositionally biased region" description="Pro residues" evidence="3">
    <location>
        <begin position="77"/>
        <end position="89"/>
    </location>
</feature>
<feature type="compositionally biased region" description="Low complexity" evidence="3">
    <location>
        <begin position="450"/>
        <end position="491"/>
    </location>
</feature>
<feature type="compositionally biased region" description="Polar residues" evidence="3">
    <location>
        <begin position="634"/>
        <end position="646"/>
    </location>
</feature>
<feature type="compositionally biased region" description="Low complexity" evidence="3">
    <location>
        <begin position="653"/>
        <end position="665"/>
    </location>
</feature>
<feature type="modified residue" description="N-acetylalanine" evidence="1">
    <location>
        <position position="2"/>
    </location>
</feature>
<feature type="modified residue" description="Phosphoserine" evidence="1">
    <location>
        <position position="487"/>
    </location>
</feature>
<feature type="modified residue" description="Omega-N-methylarginine" evidence="8">
    <location>
        <position position="543"/>
    </location>
</feature>
<feature type="sequence conflict" description="In Ref. 1; CAA86112 and 3; AAC60663." evidence="7" ref="1 3">
    <original>S</original>
    <variation>N</variation>
    <location>
        <position position="501"/>
    </location>
</feature>